<feature type="initiator methionine" description="Removed" evidence="3">
    <location>
        <position position="1"/>
    </location>
</feature>
<feature type="chain" id="PRO_0000211510" description="Charged multivesicular body protein 6">
    <location>
        <begin position="2"/>
        <end position="201"/>
    </location>
</feature>
<feature type="region of interest" description="Disordered" evidence="5">
    <location>
        <begin position="171"/>
        <end position="201"/>
    </location>
</feature>
<feature type="coiled-coil region" evidence="4">
    <location>
        <begin position="10"/>
        <end position="145"/>
    </location>
</feature>
<feature type="short sequence motif" description="Type-2 MIT-interacting motif" evidence="1">
    <location>
        <begin position="168"/>
        <end position="179"/>
    </location>
</feature>
<feature type="compositionally biased region" description="Basic and acidic residues" evidence="5">
    <location>
        <begin position="178"/>
        <end position="188"/>
    </location>
</feature>
<feature type="modified residue" description="Phosphoserine" evidence="2">
    <location>
        <position position="119"/>
    </location>
</feature>
<feature type="modified residue" description="Phosphothreonine" evidence="3">
    <location>
        <position position="130"/>
    </location>
</feature>
<feature type="lipid moiety-binding region" description="N-myristoyl glycine" evidence="3">
    <location>
        <position position="2"/>
    </location>
</feature>
<protein>
    <recommendedName>
        <fullName>Charged multivesicular body protein 6</fullName>
    </recommendedName>
    <alternativeName>
        <fullName>Chromatin-modifying protein 6</fullName>
    </alternativeName>
</protein>
<proteinExistence type="evidence at transcript level"/>
<organism>
    <name type="scientific">Pongo abelii</name>
    <name type="common">Sumatran orangutan</name>
    <name type="synonym">Pongo pygmaeus abelii</name>
    <dbReference type="NCBI Taxonomy" id="9601"/>
    <lineage>
        <taxon>Eukaryota</taxon>
        <taxon>Metazoa</taxon>
        <taxon>Chordata</taxon>
        <taxon>Craniata</taxon>
        <taxon>Vertebrata</taxon>
        <taxon>Euteleostomi</taxon>
        <taxon>Mammalia</taxon>
        <taxon>Eutheria</taxon>
        <taxon>Euarchontoglires</taxon>
        <taxon>Primates</taxon>
        <taxon>Haplorrhini</taxon>
        <taxon>Catarrhini</taxon>
        <taxon>Hominidae</taxon>
        <taxon>Pongo</taxon>
    </lineage>
</organism>
<name>CHMP6_PONAB</name>
<evidence type="ECO:0000250" key="1"/>
<evidence type="ECO:0000250" key="2">
    <source>
        <dbReference type="UniProtKB" id="P0C0A3"/>
    </source>
</evidence>
<evidence type="ECO:0000250" key="3">
    <source>
        <dbReference type="UniProtKB" id="Q96FZ7"/>
    </source>
</evidence>
<evidence type="ECO:0000255" key="4"/>
<evidence type="ECO:0000256" key="5">
    <source>
        <dbReference type="SAM" id="MobiDB-lite"/>
    </source>
</evidence>
<evidence type="ECO:0000305" key="6"/>
<reference key="1">
    <citation type="submission" date="2004-11" db="EMBL/GenBank/DDBJ databases">
        <authorList>
            <consortium name="The German cDNA consortium"/>
        </authorList>
    </citation>
    <scope>NUCLEOTIDE SEQUENCE [LARGE SCALE MRNA]</scope>
    <source>
        <tissue>Kidney</tissue>
    </source>
</reference>
<sequence length="201" mass="23486">MGNLFGRKKQSRVTEQDKAILQLKQQRDKLRQYQKRIAQQLERERALARQLLRDGRKERAKLLLKKKRYQEQLLDRTENQISSLEAMVQSIEFTQIEMKVMEGLQFGNECLNKMHQVMSIEEVERILDETQEAVEYQRQIDELLAGSFTQEDEDAILEELSAITQEQIELPEVPSEPLPEKIPEDVPVKARPRQAELVAAS</sequence>
<dbReference type="EMBL" id="CR859893">
    <property type="protein sequence ID" value="CAH92049.1"/>
    <property type="molecule type" value="mRNA"/>
</dbReference>
<dbReference type="RefSeq" id="NP_001126191.1">
    <property type="nucleotide sequence ID" value="NM_001132719.1"/>
</dbReference>
<dbReference type="SMR" id="Q5R861"/>
<dbReference type="FunCoup" id="Q5R861">
    <property type="interactions" value="1461"/>
</dbReference>
<dbReference type="STRING" id="9601.ENSPPYP00000009791"/>
<dbReference type="Ensembl" id="ENSPPYT00000010182.2">
    <property type="protein sequence ID" value="ENSPPYP00000009791.2"/>
    <property type="gene ID" value="ENSPPYG00000008725.3"/>
</dbReference>
<dbReference type="GeneID" id="100173157"/>
<dbReference type="KEGG" id="pon:100173157"/>
<dbReference type="CTD" id="79643"/>
<dbReference type="GeneTree" id="ENSGT00720000108863"/>
<dbReference type="InParanoid" id="Q5R861"/>
<dbReference type="OMA" id="RAKQPAM"/>
<dbReference type="OrthoDB" id="441172at2759"/>
<dbReference type="Proteomes" id="UP000001595">
    <property type="component" value="Chromosome 17"/>
</dbReference>
<dbReference type="GO" id="GO:1904930">
    <property type="term" value="C:amphisome membrane"/>
    <property type="evidence" value="ECO:0007669"/>
    <property type="project" value="Ensembl"/>
</dbReference>
<dbReference type="GO" id="GO:0000815">
    <property type="term" value="C:ESCRT III complex"/>
    <property type="evidence" value="ECO:0007669"/>
    <property type="project" value="Ensembl"/>
</dbReference>
<dbReference type="GO" id="GO:0000776">
    <property type="term" value="C:kinetochore"/>
    <property type="evidence" value="ECO:0007669"/>
    <property type="project" value="Ensembl"/>
</dbReference>
<dbReference type="GO" id="GO:0005828">
    <property type="term" value="C:kinetochore microtubule"/>
    <property type="evidence" value="ECO:0007669"/>
    <property type="project" value="Ensembl"/>
</dbReference>
<dbReference type="GO" id="GO:0005765">
    <property type="term" value="C:lysosomal membrane"/>
    <property type="evidence" value="ECO:0007669"/>
    <property type="project" value="Ensembl"/>
</dbReference>
<dbReference type="GO" id="GO:0030496">
    <property type="term" value="C:midbody"/>
    <property type="evidence" value="ECO:0007669"/>
    <property type="project" value="Ensembl"/>
</dbReference>
<dbReference type="GO" id="GO:0032585">
    <property type="term" value="C:multivesicular body membrane"/>
    <property type="evidence" value="ECO:0007669"/>
    <property type="project" value="Ensembl"/>
</dbReference>
<dbReference type="GO" id="GO:0005643">
    <property type="term" value="C:nuclear pore"/>
    <property type="evidence" value="ECO:0007669"/>
    <property type="project" value="Ensembl"/>
</dbReference>
<dbReference type="GO" id="GO:0005886">
    <property type="term" value="C:plasma membrane"/>
    <property type="evidence" value="ECO:0007669"/>
    <property type="project" value="Ensembl"/>
</dbReference>
<dbReference type="GO" id="GO:0044877">
    <property type="term" value="F:protein-containing complex binding"/>
    <property type="evidence" value="ECO:0007669"/>
    <property type="project" value="Ensembl"/>
</dbReference>
<dbReference type="GO" id="GO:0097352">
    <property type="term" value="P:autophagosome maturation"/>
    <property type="evidence" value="ECO:0007669"/>
    <property type="project" value="Ensembl"/>
</dbReference>
<dbReference type="GO" id="GO:1902774">
    <property type="term" value="P:late endosome to lysosome transport"/>
    <property type="evidence" value="ECO:0007669"/>
    <property type="project" value="Ensembl"/>
</dbReference>
<dbReference type="GO" id="GO:0032511">
    <property type="term" value="P:late endosome to vacuole transport via multivesicular body sorting pathway"/>
    <property type="evidence" value="ECO:0007669"/>
    <property type="project" value="TreeGrafter"/>
</dbReference>
<dbReference type="GO" id="GO:0061952">
    <property type="term" value="P:midbody abscission"/>
    <property type="evidence" value="ECO:0007669"/>
    <property type="project" value="Ensembl"/>
</dbReference>
<dbReference type="GO" id="GO:0007080">
    <property type="term" value="P:mitotic metaphase chromosome alignment"/>
    <property type="evidence" value="ECO:0007669"/>
    <property type="project" value="Ensembl"/>
</dbReference>
<dbReference type="GO" id="GO:0031468">
    <property type="term" value="P:nuclear membrane reassembly"/>
    <property type="evidence" value="ECO:0007669"/>
    <property type="project" value="Ensembl"/>
</dbReference>
<dbReference type="GO" id="GO:0001778">
    <property type="term" value="P:plasma membrane repair"/>
    <property type="evidence" value="ECO:0007669"/>
    <property type="project" value="Ensembl"/>
</dbReference>
<dbReference type="GO" id="GO:0015031">
    <property type="term" value="P:protein transport"/>
    <property type="evidence" value="ECO:0007669"/>
    <property type="project" value="UniProtKB-KW"/>
</dbReference>
<dbReference type="GO" id="GO:1901673">
    <property type="term" value="P:regulation of mitotic spindle assembly"/>
    <property type="evidence" value="ECO:0007669"/>
    <property type="project" value="Ensembl"/>
</dbReference>
<dbReference type="GO" id="GO:0042176">
    <property type="term" value="P:regulation of protein catabolic process"/>
    <property type="evidence" value="ECO:0007669"/>
    <property type="project" value="Ensembl"/>
</dbReference>
<dbReference type="GO" id="GO:0043162">
    <property type="term" value="P:ubiquitin-dependent protein catabolic process via the multivesicular body sorting pathway"/>
    <property type="evidence" value="ECO:0007669"/>
    <property type="project" value="Ensembl"/>
</dbReference>
<dbReference type="GO" id="GO:0006900">
    <property type="term" value="P:vesicle budding from membrane"/>
    <property type="evidence" value="ECO:0007669"/>
    <property type="project" value="TreeGrafter"/>
</dbReference>
<dbReference type="GO" id="GO:0046761">
    <property type="term" value="P:viral budding from plasma membrane"/>
    <property type="evidence" value="ECO:0007669"/>
    <property type="project" value="Ensembl"/>
</dbReference>
<dbReference type="GO" id="GO:0039702">
    <property type="term" value="P:viral budding via host ESCRT complex"/>
    <property type="evidence" value="ECO:0007669"/>
    <property type="project" value="Ensembl"/>
</dbReference>
<dbReference type="Gene3D" id="1.10.287.1060">
    <property type="entry name" value="ESAT-6-like"/>
    <property type="match status" value="1"/>
</dbReference>
<dbReference type="InterPro" id="IPR005024">
    <property type="entry name" value="Snf7_fam"/>
</dbReference>
<dbReference type="PANTHER" id="PTHR22761">
    <property type="entry name" value="CHARGED MULTIVESICULAR BODY PROTEIN"/>
    <property type="match status" value="1"/>
</dbReference>
<dbReference type="PANTHER" id="PTHR22761:SF5">
    <property type="entry name" value="CHARGED MULTIVESICULAR BODY PROTEIN 6"/>
    <property type="match status" value="1"/>
</dbReference>
<dbReference type="Pfam" id="PF03357">
    <property type="entry name" value="Snf7"/>
    <property type="match status" value="1"/>
</dbReference>
<comment type="function">
    <text evidence="1">Probable core component of the endosomal sorting required for transport complex III (ESCRT-III) which is involved in multivesicular bodies (MVBs) formation and sorting of endosomal cargo proteins into MVBs. MVBs contain intraluminal vesicles (ILVs) that are generated by invagination and scission from the limiting membrane of the endosome and mostly are delivered to lysosomes enabling degradation of membrane proteins, such as stimulated growth factor receptors, lysosomal enzymes and lipids. The MVB pathway appears to require the sequential function of ESCRT-O, -I,-II and -III complexes. ESCRT-III proteins mostly dissociate from the invaginating membrane before the ILV is released. The ESCRT machinery also functions in topologically equivalent membrane fission events, such as the terminal stages of cytokinesis and the budding of enveloped viruses (lentiviruses). ESCRT-III proteins are believed to mediate the necessary vesicle extrusion and/or membrane fission activities, possibly in conjunction with the AAA ATPase VPS4. In the ESCRT-III complex, it probably serves as an acceptor for the ESCRT-II complex on endosomal membrane (By similarity).</text>
</comment>
<comment type="subunit">
    <text evidence="1">Probable core component of the endosomal sorting required for transport complex III (ESCRT-III). ESCRT-III components are thought to multimerize to form a flat lattice on the perimeter membrane of the endosome. Several assembly forms of ESCRT-III may exist that interact and act sequentially. Interacts with VPS4A; the interaction is direct. Interacts with VPS4B; the interaction is direct. Interacts with CHMP4A, CHMP4B and CHMP4C. Interacts with SNF8, VPS25 and VPS36 (By similarity).</text>
</comment>
<comment type="subcellular location">
    <subcellularLocation>
        <location evidence="1">Endomembrane system</location>
    </subcellularLocation>
    <subcellularLocation>
        <location evidence="1">Endosome membrane</location>
        <topology evidence="1">Lipid-anchor</topology>
    </subcellularLocation>
    <subcellularLocation>
        <location evidence="1">Late endosome membrane</location>
    </subcellularLocation>
    <subcellularLocation>
        <location evidence="3">Membrane</location>
        <topology evidence="3">Lipid-anchor</topology>
    </subcellularLocation>
    <text evidence="1">Localizes to endosomal membranes.</text>
</comment>
<comment type="domain">
    <text evidence="1">The acidic C-terminus and the basic N-termminus are thought to render the protein in a closed, soluble and inactive conformation through an autoinhibitory intramolecular interaction. The open and active conformation, which enables membrane binding and oligomerization, is achieved by interaction with other cellular binding partners, probably including other ESCRT components (By similarity).</text>
</comment>
<comment type="PTM">
    <text evidence="1">ISGylated in a CHMP5-dependent manner. Isgylation weakens its interaction with VPS4A (By similarity).</text>
</comment>
<comment type="similarity">
    <text evidence="6">Belongs to the SNF7 family.</text>
</comment>
<gene>
    <name type="primary">CHMP6</name>
</gene>
<keyword id="KW-0175">Coiled coil</keyword>
<keyword id="KW-0967">Endosome</keyword>
<keyword id="KW-0449">Lipoprotein</keyword>
<keyword id="KW-0472">Membrane</keyword>
<keyword id="KW-0519">Myristate</keyword>
<keyword id="KW-0597">Phosphoprotein</keyword>
<keyword id="KW-0653">Protein transport</keyword>
<keyword id="KW-1185">Reference proteome</keyword>
<keyword id="KW-0813">Transport</keyword>
<keyword id="KW-0832">Ubl conjugation</keyword>
<accession>Q5R861</accession>